<feature type="chain" id="PRO_0000220875" description="Dolichol phosphate-mannose biosynthesis regulatory protein">
    <location>
        <begin position="1"/>
        <end position="84"/>
    </location>
</feature>
<feature type="transmembrane region" description="Helical" evidence="2">
    <location>
        <begin position="11"/>
        <end position="31"/>
    </location>
</feature>
<feature type="transmembrane region" description="Helical" evidence="2">
    <location>
        <begin position="49"/>
        <end position="69"/>
    </location>
</feature>
<feature type="mutagenesis site" description="Abolishes interaction with DPM1; when associated with S-23." evidence="3">
    <original>F</original>
    <variation>L</variation>
    <location>
        <position position="21"/>
    </location>
</feature>
<feature type="mutagenesis site" description="Abolishes interaction with DPM1; when associated with L-21." evidence="3">
    <original>Y</original>
    <variation>S</variation>
    <location>
        <position position="23"/>
    </location>
</feature>
<comment type="function">
    <text evidence="1 3">Regulates the biosynthesis of dolichol phosphate-mannose (PubMed:9724629). Regulatory subunit of the dolichol-phosphate mannose (DPM) synthase complex; essential for the ER localization and stable expression of DPM1 (PubMed:9724629). Part of the glycosylphosphatidylinositol-N-acetylglucosaminyltransferase (GPI-GnT) complex that catalyzes the transfer of N-acetylglucosamine from UDP-N-acetylglucosamine to phosphatidylinositol and participates in the first step of GPI biosynthesis. May act by regulating the GPI-GNT complex (By similarity).</text>
</comment>
<comment type="pathway">
    <text evidence="3">Protein modification; protein glycosylation.</text>
</comment>
<comment type="subunit">
    <text evidence="1 3">Component of the dolichol-phosphate mannose (DPM) synthase complex composed of DPM1, DPM2 and DPM3; in the complex interacts directly with DPM3 (PubMed:9724629). Component of the glycosylphosphatidylinositol-N-acetylglucosaminyltransferase (GPI-GnT) complex composed at least by PIGA, PIGC, PIGH, PIGP, PIGQ, PIGY and DPM2. Interacts with PIGA, PIGC and PIGQ (By similarity).</text>
</comment>
<comment type="interaction">
    <interactant intactId="EBI-9097185">
        <id>Q9Z325</id>
    </interactant>
    <interactant intactId="EBI-9087337">
        <id>Q9P2X0</id>
        <label>DPM3</label>
    </interactant>
    <organismsDiffer>true</organismsDiffer>
    <experiments>2</experiments>
</comment>
<comment type="subcellular location">
    <subcellularLocation>
        <location evidence="3">Endoplasmic reticulum membrane</location>
        <topology evidence="3">Multi-pass membrane protein</topology>
    </subcellularLocation>
</comment>
<comment type="similarity">
    <text evidence="4">Belongs to the DPM2 family.</text>
</comment>
<sequence length="84" mass="9344">MATGTDQAVGFGLVAVSLIIFTYYTTWVILLPFIDSQHVIHKYFLPRAYAVLLPLAAGLLLLLFVGLFITYVLLKSQKVTKKAQ</sequence>
<reference key="1">
    <citation type="journal article" date="1998" name="EMBO J.">
        <title>DPM2 regulates biosynthesis of dolichol phosphate-mannose in mammalian cells: correct subcellular localization and stabilization of DPM1, and binding of dolichol phosphate.</title>
        <authorList>
            <person name="Maeda Y."/>
            <person name="Tomita S."/>
            <person name="Watanabe R."/>
            <person name="Ohishi K."/>
            <person name="Kinoshita T."/>
        </authorList>
    </citation>
    <scope>NUCLEOTIDE SEQUENCE [MRNA]</scope>
    <scope>FUNCTION</scope>
    <scope>SUBCELLULAR LOCATION</scope>
    <scope>INTERACTION WITH DPM1</scope>
    <scope>MUTAGENESIS OF PHE-21 AND TYR-23</scope>
</reference>
<accession>Q9Z325</accession>
<keyword id="KW-0256">Endoplasmic reticulum</keyword>
<keyword id="KW-0472">Membrane</keyword>
<keyword id="KW-1185">Reference proteome</keyword>
<keyword id="KW-0812">Transmembrane</keyword>
<keyword id="KW-1133">Transmembrane helix</keyword>
<name>DPM2_RAT</name>
<evidence type="ECO:0000250" key="1">
    <source>
        <dbReference type="UniProtKB" id="O94777"/>
    </source>
</evidence>
<evidence type="ECO:0000255" key="2"/>
<evidence type="ECO:0000269" key="3">
    <source>
    </source>
</evidence>
<evidence type="ECO:0000305" key="4"/>
<evidence type="ECO:0000312" key="5">
    <source>
        <dbReference type="RGD" id="2514"/>
    </source>
</evidence>
<dbReference type="EMBL" id="AB013359">
    <property type="protein sequence ID" value="BAA33972.1"/>
    <property type="molecule type" value="mRNA"/>
</dbReference>
<dbReference type="RefSeq" id="NP_062125.1">
    <property type="nucleotide sequence ID" value="NM_019252.2"/>
</dbReference>
<dbReference type="SMR" id="Q9Z325"/>
<dbReference type="FunCoup" id="Q9Z325">
    <property type="interactions" value="759"/>
</dbReference>
<dbReference type="IntAct" id="Q9Z325">
    <property type="interactions" value="1"/>
</dbReference>
<dbReference type="STRING" id="10116.ENSRNOP00000065111"/>
<dbReference type="PaxDb" id="10116-ENSRNOP00000065111"/>
<dbReference type="GeneID" id="29640"/>
<dbReference type="KEGG" id="rno:29640"/>
<dbReference type="AGR" id="RGD:2514"/>
<dbReference type="CTD" id="8818"/>
<dbReference type="RGD" id="2514">
    <property type="gene designation" value="Dpm2"/>
</dbReference>
<dbReference type="eggNOG" id="KOG3488">
    <property type="taxonomic scope" value="Eukaryota"/>
</dbReference>
<dbReference type="InParanoid" id="Q9Z325"/>
<dbReference type="OrthoDB" id="92312at9989"/>
<dbReference type="PhylomeDB" id="Q9Z325"/>
<dbReference type="Reactome" id="R-RNO-162699">
    <property type="pathway name" value="Synthesis of dolichyl-phosphate mannose"/>
</dbReference>
<dbReference type="Reactome" id="R-RNO-162710">
    <property type="pathway name" value="Synthesis of glycosylphosphatidylinositol (GPI)"/>
</dbReference>
<dbReference type="UniPathway" id="UPA00378"/>
<dbReference type="PRO" id="PR:Q9Z325"/>
<dbReference type="Proteomes" id="UP000002494">
    <property type="component" value="Unplaced"/>
</dbReference>
<dbReference type="GO" id="GO:0033185">
    <property type="term" value="C:dolichol-phosphate-mannose synthase complex"/>
    <property type="evidence" value="ECO:0000314"/>
    <property type="project" value="MGI"/>
</dbReference>
<dbReference type="GO" id="GO:0005783">
    <property type="term" value="C:endoplasmic reticulum"/>
    <property type="evidence" value="ECO:0000314"/>
    <property type="project" value="MGI"/>
</dbReference>
<dbReference type="GO" id="GO:0005789">
    <property type="term" value="C:endoplasmic reticulum membrane"/>
    <property type="evidence" value="ECO:0000266"/>
    <property type="project" value="RGD"/>
</dbReference>
<dbReference type="GO" id="GO:0000506">
    <property type="term" value="C:glycosylphosphatidylinositol-N-acetylglucosaminyltransferase (GPI-GnT) complex"/>
    <property type="evidence" value="ECO:0000250"/>
    <property type="project" value="UniProtKB"/>
</dbReference>
<dbReference type="GO" id="GO:0048471">
    <property type="term" value="C:perinuclear region of cytoplasm"/>
    <property type="evidence" value="ECO:0000314"/>
    <property type="project" value="RGD"/>
</dbReference>
<dbReference type="GO" id="GO:0004582">
    <property type="term" value="F:dolichyl-phosphate beta-D-mannosyltransferase activity"/>
    <property type="evidence" value="ECO:0000314"/>
    <property type="project" value="MGI"/>
</dbReference>
<dbReference type="GO" id="GO:0008047">
    <property type="term" value="F:enzyme activator activity"/>
    <property type="evidence" value="ECO:0000266"/>
    <property type="project" value="RGD"/>
</dbReference>
<dbReference type="GO" id="GO:0030234">
    <property type="term" value="F:enzyme regulator activity"/>
    <property type="evidence" value="ECO:0000314"/>
    <property type="project" value="RGD"/>
</dbReference>
<dbReference type="GO" id="GO:0019348">
    <property type="term" value="P:dolichol metabolic process"/>
    <property type="evidence" value="ECO:0000314"/>
    <property type="project" value="MGI"/>
</dbReference>
<dbReference type="GO" id="GO:0180047">
    <property type="term" value="P:dolichol phosphate mannose biosynthetic process"/>
    <property type="evidence" value="ECO:0007669"/>
    <property type="project" value="InterPro"/>
</dbReference>
<dbReference type="GO" id="GO:0006506">
    <property type="term" value="P:GPI anchor biosynthetic process"/>
    <property type="evidence" value="ECO:0000314"/>
    <property type="project" value="MGI"/>
</dbReference>
<dbReference type="GO" id="GO:0006486">
    <property type="term" value="P:protein glycosylation"/>
    <property type="evidence" value="ECO:0007669"/>
    <property type="project" value="UniProtKB-UniPathway"/>
</dbReference>
<dbReference type="GO" id="GO:0031647">
    <property type="term" value="P:regulation of protein stability"/>
    <property type="evidence" value="ECO:0000266"/>
    <property type="project" value="RGD"/>
</dbReference>
<dbReference type="InterPro" id="IPR009914">
    <property type="entry name" value="DPM2"/>
</dbReference>
<dbReference type="PANTHER" id="PTHR15039">
    <property type="entry name" value="DOLICHOL PHOSPHATE-MANNOSE BIOSYNTHESIS REGULATORY PROTEIN"/>
    <property type="match status" value="1"/>
</dbReference>
<dbReference type="PANTHER" id="PTHR15039:SF11">
    <property type="entry name" value="DOLICHOL PHOSPHATE-MANNOSE BIOSYNTHESIS REGULATORY PROTEIN"/>
    <property type="match status" value="1"/>
</dbReference>
<dbReference type="Pfam" id="PF07297">
    <property type="entry name" value="DPM2"/>
    <property type="match status" value="1"/>
</dbReference>
<gene>
    <name evidence="5" type="primary">Dpm2</name>
</gene>
<protein>
    <recommendedName>
        <fullName evidence="4">Dolichol phosphate-mannose biosynthesis regulatory protein</fullName>
    </recommendedName>
    <alternativeName>
        <fullName>Dolichol-phosphate mannose synthase subunit 2</fullName>
        <shortName>DPM synthase subunit 2</shortName>
    </alternativeName>
</protein>
<proteinExistence type="evidence at protein level"/>
<organism>
    <name type="scientific">Rattus norvegicus</name>
    <name type="common">Rat</name>
    <dbReference type="NCBI Taxonomy" id="10116"/>
    <lineage>
        <taxon>Eukaryota</taxon>
        <taxon>Metazoa</taxon>
        <taxon>Chordata</taxon>
        <taxon>Craniata</taxon>
        <taxon>Vertebrata</taxon>
        <taxon>Euteleostomi</taxon>
        <taxon>Mammalia</taxon>
        <taxon>Eutheria</taxon>
        <taxon>Euarchontoglires</taxon>
        <taxon>Glires</taxon>
        <taxon>Rodentia</taxon>
        <taxon>Myomorpha</taxon>
        <taxon>Muroidea</taxon>
        <taxon>Muridae</taxon>
        <taxon>Murinae</taxon>
        <taxon>Rattus</taxon>
    </lineage>
</organism>